<accession>Q4PR42</accession>
<accession>A3A5D3</accession>
<accession>Q6ERU5</accession>
<accession>Q946H8</accession>
<proteinExistence type="evidence at transcript level"/>
<protein>
    <recommendedName>
        <fullName>Expansin-A24</fullName>
    </recommendedName>
    <alternativeName>
        <fullName>Alpha-expansin-24</fullName>
    </alternativeName>
    <alternativeName>
        <fullName>OsEXP24</fullName>
    </alternativeName>
    <alternativeName>
        <fullName>OsEXPA24</fullName>
    </alternativeName>
    <alternativeName>
        <fullName>OsaEXPa1.10</fullName>
    </alternativeName>
</protein>
<organism>
    <name type="scientific">Oryza sativa subsp. japonica</name>
    <name type="common">Rice</name>
    <dbReference type="NCBI Taxonomy" id="39947"/>
    <lineage>
        <taxon>Eukaryota</taxon>
        <taxon>Viridiplantae</taxon>
        <taxon>Streptophyta</taxon>
        <taxon>Embryophyta</taxon>
        <taxon>Tracheophyta</taxon>
        <taxon>Spermatophyta</taxon>
        <taxon>Magnoliopsida</taxon>
        <taxon>Liliopsida</taxon>
        <taxon>Poales</taxon>
        <taxon>Poaceae</taxon>
        <taxon>BOP clade</taxon>
        <taxon>Oryzoideae</taxon>
        <taxon>Oryzeae</taxon>
        <taxon>Oryzinae</taxon>
        <taxon>Oryza</taxon>
        <taxon>Oryza sativa</taxon>
    </lineage>
</organism>
<sequence>MADMAPARALALVLLAVAVGSALMAAAQDAPSPPTPMAPSPSTDETPPVWLKAHATFYGGADASGTMGGACGYVDLYSQGYGTRNAALSTALFNDGASCGQCYKIACDRKRAPQWCKPGVTVTVTATNFCPPNWNLPSDNGGWCNPPRPHFDMAQPAWEKIGIYRAGIIPVMYQRVPCVKKGGVRFTINGHDYFNLVLVTNVATTGSIKSMDIMGSNSTDWMPMVRNWGANWHSLSYLTGQMLSFRVTNMDGQTLVFRNIVPSGWKFGQTFASKLQFK</sequence>
<evidence type="ECO:0000250" key="1"/>
<evidence type="ECO:0000255" key="2"/>
<evidence type="ECO:0000255" key="3">
    <source>
        <dbReference type="PROSITE-ProRule" id="PRU00078"/>
    </source>
</evidence>
<evidence type="ECO:0000255" key="4">
    <source>
        <dbReference type="PROSITE-ProRule" id="PRU00079"/>
    </source>
</evidence>
<evidence type="ECO:0000269" key="5">
    <source>
    </source>
</evidence>
<evidence type="ECO:0000305" key="6"/>
<evidence type="ECO:0000312" key="7">
    <source>
        <dbReference type="EMBL" id="EAZ22522.1"/>
    </source>
</evidence>
<feature type="signal peptide" evidence="2">
    <location>
        <begin position="1"/>
        <end position="27"/>
    </location>
</feature>
<feature type="chain" id="PRO_0000252003" description="Expansin-A24">
    <location>
        <begin position="28"/>
        <end position="278"/>
    </location>
</feature>
<feature type="domain" description="Expansin-like EG45" evidence="4">
    <location>
        <begin position="68"/>
        <end position="183"/>
    </location>
</feature>
<feature type="domain" description="Expansin-like CBD" evidence="3">
    <location>
        <begin position="193"/>
        <end position="273"/>
    </location>
</feature>
<feature type="glycosylation site" description="N-linked (GlcNAc...) asparagine" evidence="2">
    <location>
        <position position="217"/>
    </location>
</feature>
<feature type="sequence conflict" description="In Ref. 1; AAL24495 and 2; AAY63556." evidence="6" ref="1 2">
    <original>G</original>
    <variation>E</variation>
    <location>
        <position position="119"/>
    </location>
</feature>
<keyword id="KW-0134">Cell wall</keyword>
<keyword id="KW-0961">Cell wall biogenesis/degradation</keyword>
<keyword id="KW-0325">Glycoprotein</keyword>
<keyword id="KW-0472">Membrane</keyword>
<keyword id="KW-1185">Reference proteome</keyword>
<keyword id="KW-0964">Secreted</keyword>
<keyword id="KW-0732">Signal</keyword>
<dbReference type="EMBL" id="AF394559">
    <property type="protein sequence ID" value="AAL24495.1"/>
    <property type="molecule type" value="Genomic_DNA"/>
</dbReference>
<dbReference type="EMBL" id="DQ061065">
    <property type="protein sequence ID" value="AAY63556.1"/>
    <property type="molecule type" value="mRNA"/>
</dbReference>
<dbReference type="EMBL" id="AP005428">
    <property type="protein sequence ID" value="BAD28625.1"/>
    <property type="molecule type" value="Genomic_DNA"/>
</dbReference>
<dbReference type="EMBL" id="AP014958">
    <property type="protein sequence ID" value="BAS78032.1"/>
    <property type="molecule type" value="Genomic_DNA"/>
</dbReference>
<dbReference type="EMBL" id="CM000139">
    <property type="protein sequence ID" value="EAZ22522.1"/>
    <property type="molecule type" value="Genomic_DNA"/>
</dbReference>
<dbReference type="SMR" id="Q4PR42"/>
<dbReference type="FunCoup" id="Q4PR42">
    <property type="interactions" value="15"/>
</dbReference>
<dbReference type="STRING" id="39947.Q4PR42"/>
<dbReference type="GlyCosmos" id="Q4PR42">
    <property type="glycosylation" value="1 site, No reported glycans"/>
</dbReference>
<dbReference type="PaxDb" id="39947-Q4PR42"/>
<dbReference type="EnsemblPlants" id="Os02t0267900-00">
    <property type="protein sequence ID" value="Os02t0267900-00"/>
    <property type="gene ID" value="Os02g0267900"/>
</dbReference>
<dbReference type="GeneID" id="107276428"/>
<dbReference type="Gramene" id="Os02t0267900-00">
    <property type="protein sequence ID" value="Os02t0267900-00"/>
    <property type="gene ID" value="Os02g0267900"/>
</dbReference>
<dbReference type="KEGG" id="osa:107276428"/>
<dbReference type="eggNOG" id="ENOG502SWQD">
    <property type="taxonomic scope" value="Eukaryota"/>
</dbReference>
<dbReference type="HOGENOM" id="CLU_027462_0_1_1"/>
<dbReference type="InParanoid" id="Q4PR42"/>
<dbReference type="OMA" id="NGQRYFI"/>
<dbReference type="OrthoDB" id="5823761at2759"/>
<dbReference type="Proteomes" id="UP000000763">
    <property type="component" value="Chromosome 2"/>
</dbReference>
<dbReference type="Proteomes" id="UP000007752">
    <property type="component" value="Chromosome 2"/>
</dbReference>
<dbReference type="Proteomes" id="UP000059680">
    <property type="component" value="Chromosome 2"/>
</dbReference>
<dbReference type="GO" id="GO:0005576">
    <property type="term" value="C:extracellular region"/>
    <property type="evidence" value="ECO:0007669"/>
    <property type="project" value="UniProtKB-KW"/>
</dbReference>
<dbReference type="GO" id="GO:0016020">
    <property type="term" value="C:membrane"/>
    <property type="evidence" value="ECO:0007669"/>
    <property type="project" value="UniProtKB-SubCell"/>
</dbReference>
<dbReference type="GO" id="GO:0009828">
    <property type="term" value="P:plant-type cell wall loosening"/>
    <property type="evidence" value="ECO:0000250"/>
    <property type="project" value="UniProtKB"/>
</dbReference>
<dbReference type="CDD" id="cd22274">
    <property type="entry name" value="DPBB_EXPA_N"/>
    <property type="match status" value="1"/>
</dbReference>
<dbReference type="FunFam" id="2.40.40.10:FF:000001">
    <property type="entry name" value="Expansin"/>
    <property type="match status" value="1"/>
</dbReference>
<dbReference type="Gene3D" id="2.60.40.760">
    <property type="entry name" value="Expansin, cellulose-binding-like domain"/>
    <property type="match status" value="1"/>
</dbReference>
<dbReference type="Gene3D" id="2.40.40.10">
    <property type="entry name" value="RlpA-like domain"/>
    <property type="match status" value="1"/>
</dbReference>
<dbReference type="InterPro" id="IPR007118">
    <property type="entry name" value="Expan_Lol_pI"/>
</dbReference>
<dbReference type="InterPro" id="IPR002963">
    <property type="entry name" value="Expansin"/>
</dbReference>
<dbReference type="InterPro" id="IPR007112">
    <property type="entry name" value="Expansin/allergen_DPBB_dom"/>
</dbReference>
<dbReference type="InterPro" id="IPR007117">
    <property type="entry name" value="Expansin_CBD"/>
</dbReference>
<dbReference type="InterPro" id="IPR036749">
    <property type="entry name" value="Expansin_CBD_sf"/>
</dbReference>
<dbReference type="InterPro" id="IPR009009">
    <property type="entry name" value="RlpA-like_DPBB"/>
</dbReference>
<dbReference type="InterPro" id="IPR036908">
    <property type="entry name" value="RlpA-like_sf"/>
</dbReference>
<dbReference type="PANTHER" id="PTHR31867">
    <property type="entry name" value="EXPANSIN-A15"/>
    <property type="match status" value="1"/>
</dbReference>
<dbReference type="Pfam" id="PF03330">
    <property type="entry name" value="DPBB_1"/>
    <property type="match status" value="1"/>
</dbReference>
<dbReference type="Pfam" id="PF01357">
    <property type="entry name" value="Expansin_C"/>
    <property type="match status" value="1"/>
</dbReference>
<dbReference type="PRINTS" id="PR01226">
    <property type="entry name" value="EXPANSIN"/>
</dbReference>
<dbReference type="PRINTS" id="PR01225">
    <property type="entry name" value="EXPANSNFAMLY"/>
</dbReference>
<dbReference type="SMART" id="SM00837">
    <property type="entry name" value="DPBB_1"/>
    <property type="match status" value="1"/>
</dbReference>
<dbReference type="SUPFAM" id="SSF50685">
    <property type="entry name" value="Barwin-like endoglucanases"/>
    <property type="match status" value="1"/>
</dbReference>
<dbReference type="SUPFAM" id="SSF49590">
    <property type="entry name" value="PHL pollen allergen"/>
    <property type="match status" value="1"/>
</dbReference>
<dbReference type="PROSITE" id="PS50843">
    <property type="entry name" value="EXPANSIN_CBD"/>
    <property type="match status" value="1"/>
</dbReference>
<dbReference type="PROSITE" id="PS50842">
    <property type="entry name" value="EXPANSIN_EG45"/>
    <property type="match status" value="1"/>
</dbReference>
<name>EXP24_ORYSJ</name>
<gene>
    <name type="primary">EXPA24</name>
    <name type="synonym">EXP24</name>
    <name type="ordered locus">Os02g0267900</name>
    <name type="ordered locus">LOC_Os02g16800</name>
    <name evidence="7" type="ORF">OsJ_06187</name>
    <name type="ORF">P0693E08.12</name>
</gene>
<reference key="1">
    <citation type="journal article" date="2002" name="Plant Physiol.">
        <title>Expression of alpha-expansin and expansin-like genes in deepwater rice.</title>
        <authorList>
            <person name="Lee Y."/>
            <person name="Kende H."/>
        </authorList>
    </citation>
    <scope>NUCLEOTIDE SEQUENCE [GENOMIC DNA]</scope>
</reference>
<reference key="2">
    <citation type="journal article" date="2005" name="Mol. Cells">
        <title>Characterization and transcriptional expression of the alpha-expansin gene family in rice.</title>
        <authorList>
            <person name="Shin J.-H."/>
            <person name="Jeong D.-H."/>
            <person name="Park M.C."/>
            <person name="An G."/>
        </authorList>
    </citation>
    <scope>NUCLEOTIDE SEQUENCE [MRNA]</scope>
    <scope>TISSUE SPECIFICITY</scope>
    <source>
        <strain>cv. Dongjin</strain>
    </source>
</reference>
<reference key="3">
    <citation type="journal article" date="2005" name="Nature">
        <title>The map-based sequence of the rice genome.</title>
        <authorList>
            <consortium name="International rice genome sequencing project (IRGSP)"/>
        </authorList>
    </citation>
    <scope>NUCLEOTIDE SEQUENCE [LARGE SCALE GENOMIC DNA]</scope>
    <source>
        <strain>cv. Nipponbare</strain>
    </source>
</reference>
<reference key="4">
    <citation type="journal article" date="2013" name="Rice">
        <title>Improvement of the Oryza sativa Nipponbare reference genome using next generation sequence and optical map data.</title>
        <authorList>
            <person name="Kawahara Y."/>
            <person name="de la Bastide M."/>
            <person name="Hamilton J.P."/>
            <person name="Kanamori H."/>
            <person name="McCombie W.R."/>
            <person name="Ouyang S."/>
            <person name="Schwartz D.C."/>
            <person name="Tanaka T."/>
            <person name="Wu J."/>
            <person name="Zhou S."/>
            <person name="Childs K.L."/>
            <person name="Davidson R.M."/>
            <person name="Lin H."/>
            <person name="Quesada-Ocampo L."/>
            <person name="Vaillancourt B."/>
            <person name="Sakai H."/>
            <person name="Lee S.S."/>
            <person name="Kim J."/>
            <person name="Numa H."/>
            <person name="Itoh T."/>
            <person name="Buell C.R."/>
            <person name="Matsumoto T."/>
        </authorList>
    </citation>
    <scope>GENOME REANNOTATION</scope>
    <source>
        <strain>cv. Nipponbare</strain>
    </source>
</reference>
<reference key="5">
    <citation type="journal article" date="2005" name="PLoS Biol.">
        <title>The genomes of Oryza sativa: a history of duplications.</title>
        <authorList>
            <person name="Yu J."/>
            <person name="Wang J."/>
            <person name="Lin W."/>
            <person name="Li S."/>
            <person name="Li H."/>
            <person name="Zhou J."/>
            <person name="Ni P."/>
            <person name="Dong W."/>
            <person name="Hu S."/>
            <person name="Zeng C."/>
            <person name="Zhang J."/>
            <person name="Zhang Y."/>
            <person name="Li R."/>
            <person name="Xu Z."/>
            <person name="Li S."/>
            <person name="Li X."/>
            <person name="Zheng H."/>
            <person name="Cong L."/>
            <person name="Lin L."/>
            <person name="Yin J."/>
            <person name="Geng J."/>
            <person name="Li G."/>
            <person name="Shi J."/>
            <person name="Liu J."/>
            <person name="Lv H."/>
            <person name="Li J."/>
            <person name="Wang J."/>
            <person name="Deng Y."/>
            <person name="Ran L."/>
            <person name="Shi X."/>
            <person name="Wang X."/>
            <person name="Wu Q."/>
            <person name="Li C."/>
            <person name="Ren X."/>
            <person name="Wang J."/>
            <person name="Wang X."/>
            <person name="Li D."/>
            <person name="Liu D."/>
            <person name="Zhang X."/>
            <person name="Ji Z."/>
            <person name="Zhao W."/>
            <person name="Sun Y."/>
            <person name="Zhang Z."/>
            <person name="Bao J."/>
            <person name="Han Y."/>
            <person name="Dong L."/>
            <person name="Ji J."/>
            <person name="Chen P."/>
            <person name="Wu S."/>
            <person name="Liu J."/>
            <person name="Xiao Y."/>
            <person name="Bu D."/>
            <person name="Tan J."/>
            <person name="Yang L."/>
            <person name="Ye C."/>
            <person name="Zhang J."/>
            <person name="Xu J."/>
            <person name="Zhou Y."/>
            <person name="Yu Y."/>
            <person name="Zhang B."/>
            <person name="Zhuang S."/>
            <person name="Wei H."/>
            <person name="Liu B."/>
            <person name="Lei M."/>
            <person name="Yu H."/>
            <person name="Li Y."/>
            <person name="Xu H."/>
            <person name="Wei S."/>
            <person name="He X."/>
            <person name="Fang L."/>
            <person name="Zhang Z."/>
            <person name="Zhang Y."/>
            <person name="Huang X."/>
            <person name="Su Z."/>
            <person name="Tong W."/>
            <person name="Li J."/>
            <person name="Tong Z."/>
            <person name="Li S."/>
            <person name="Ye J."/>
            <person name="Wang L."/>
            <person name="Fang L."/>
            <person name="Lei T."/>
            <person name="Chen C.-S."/>
            <person name="Chen H.-C."/>
            <person name="Xu Z."/>
            <person name="Li H."/>
            <person name="Huang H."/>
            <person name="Zhang F."/>
            <person name="Xu H."/>
            <person name="Li N."/>
            <person name="Zhao C."/>
            <person name="Li S."/>
            <person name="Dong L."/>
            <person name="Huang Y."/>
            <person name="Li L."/>
            <person name="Xi Y."/>
            <person name="Qi Q."/>
            <person name="Li W."/>
            <person name="Zhang B."/>
            <person name="Hu W."/>
            <person name="Zhang Y."/>
            <person name="Tian X."/>
            <person name="Jiao Y."/>
            <person name="Liang X."/>
            <person name="Jin J."/>
            <person name="Gao L."/>
            <person name="Zheng W."/>
            <person name="Hao B."/>
            <person name="Liu S.-M."/>
            <person name="Wang W."/>
            <person name="Yuan L."/>
            <person name="Cao M."/>
            <person name="McDermott J."/>
            <person name="Samudrala R."/>
            <person name="Wang J."/>
            <person name="Wong G.K.-S."/>
            <person name="Yang H."/>
        </authorList>
    </citation>
    <scope>NUCLEOTIDE SEQUENCE [LARGE SCALE GENOMIC DNA]</scope>
    <source>
        <strain>cv. Nipponbare</strain>
    </source>
</reference>
<reference key="6">
    <citation type="journal article" date="2004" name="Plant Mol. Biol.">
        <title>Nomenclature for members of the expansin superfamily of genes and proteins.</title>
        <authorList>
            <person name="Kende H."/>
            <person name="Bradford K.J."/>
            <person name="Brummell D.A."/>
            <person name="Cho H.-T."/>
            <person name="Cosgrove D.J."/>
            <person name="Fleming A.J."/>
            <person name="Gehring C."/>
            <person name="Lee Y."/>
            <person name="McQueen-Mason S.J."/>
            <person name="Rose J.K.C."/>
            <person name="Voesenek L.A.C."/>
        </authorList>
    </citation>
    <scope>NOMENCLATURE</scope>
</reference>
<comment type="function">
    <text evidence="1">May cause loosening and extension of plant cell walls by disrupting non-covalent bonding between cellulose microfibrils and matrix glucans. No enzymatic activity has been found. May be required for rapid internodal elongation in deepwater rice during submergence (By similarity).</text>
</comment>
<comment type="subcellular location">
    <subcellularLocation>
        <location evidence="1">Secreted</location>
        <location evidence="1">Cell wall</location>
    </subcellularLocation>
    <subcellularLocation>
        <location evidence="1">Membrane</location>
        <topology evidence="1">Peripheral membrane protein</topology>
    </subcellularLocation>
</comment>
<comment type="tissue specificity">
    <text evidence="5">Expressed in roots.</text>
</comment>
<comment type="similarity">
    <text evidence="6">Belongs to the expansin family. Expansin A subfamily.</text>
</comment>
<comment type="online information" name="EXPANSIN homepage">
    <link uri="https://www.dept.psu.edu/biology/groups/expansins/index.htm"/>
</comment>